<reference key="1">
    <citation type="journal article" date="2007" name="DNA Res.">
        <title>Complete genomic structure of the bloom-forming toxic cyanobacterium Microcystis aeruginosa NIES-843.</title>
        <authorList>
            <person name="Kaneko T."/>
            <person name="Nakajima N."/>
            <person name="Okamoto S."/>
            <person name="Suzuki I."/>
            <person name="Tanabe Y."/>
            <person name="Tamaoki M."/>
            <person name="Nakamura Y."/>
            <person name="Kasai F."/>
            <person name="Watanabe A."/>
            <person name="Kawashima K."/>
            <person name="Kishida Y."/>
            <person name="Ono A."/>
            <person name="Shimizu Y."/>
            <person name="Takahashi C."/>
            <person name="Minami C."/>
            <person name="Fujishiro T."/>
            <person name="Kohara M."/>
            <person name="Katoh M."/>
            <person name="Nakazaki N."/>
            <person name="Nakayama S."/>
            <person name="Yamada M."/>
            <person name="Tabata S."/>
            <person name="Watanabe M.M."/>
        </authorList>
    </citation>
    <scope>NUCLEOTIDE SEQUENCE [LARGE SCALE GENOMIC DNA]</scope>
    <source>
        <strain>NIES-843 / IAM M-247</strain>
    </source>
</reference>
<comment type="function">
    <text evidence="1">Component of the cytochrome b6-f complex, which mediates electron transfer between photosystem II (PSII) and photosystem I (PSI), cyclic electron flow around PSI, and state transitions. PetG is required for either the stability or assembly of the cytochrome b6-f complex.</text>
</comment>
<comment type="subunit">
    <text evidence="1">The 4 large subunits of the cytochrome b6-f complex are cytochrome b6, subunit IV (17 kDa polypeptide, PetD), cytochrome f and the Rieske protein, while the 4 small subunits are PetG, PetL, PetM and PetN. The complex functions as a dimer.</text>
</comment>
<comment type="subcellular location">
    <subcellularLocation>
        <location evidence="1">Cellular thylakoid membrane</location>
        <topology evidence="1">Single-pass membrane protein</topology>
    </subcellularLocation>
</comment>
<comment type="similarity">
    <text evidence="1">Belongs to the PetG family.</text>
</comment>
<keyword id="KW-0249">Electron transport</keyword>
<keyword id="KW-0472">Membrane</keyword>
<keyword id="KW-0602">Photosynthesis</keyword>
<keyword id="KW-0793">Thylakoid</keyword>
<keyword id="KW-0812">Transmembrane</keyword>
<keyword id="KW-1133">Transmembrane helix</keyword>
<keyword id="KW-0813">Transport</keyword>
<protein>
    <recommendedName>
        <fullName evidence="1">Cytochrome b6-f complex subunit 5</fullName>
    </recommendedName>
    <alternativeName>
        <fullName evidence="1">Cytochrome b6-f complex subunit PetG</fullName>
    </alternativeName>
    <alternativeName>
        <fullName evidence="1">Cytochrome b6-f complex subunit V</fullName>
    </alternativeName>
</protein>
<feature type="chain" id="PRO_1000080603" description="Cytochrome b6-f complex subunit 5">
    <location>
        <begin position="1"/>
        <end position="38"/>
    </location>
</feature>
<feature type="transmembrane region" description="Helical" evidence="1">
    <location>
        <begin position="5"/>
        <end position="25"/>
    </location>
</feature>
<organism>
    <name type="scientific">Microcystis aeruginosa (strain NIES-843 / IAM M-2473)</name>
    <dbReference type="NCBI Taxonomy" id="449447"/>
    <lineage>
        <taxon>Bacteria</taxon>
        <taxon>Bacillati</taxon>
        <taxon>Cyanobacteriota</taxon>
        <taxon>Cyanophyceae</taxon>
        <taxon>Oscillatoriophycideae</taxon>
        <taxon>Chroococcales</taxon>
        <taxon>Microcystaceae</taxon>
        <taxon>Microcystis</taxon>
    </lineage>
</organism>
<evidence type="ECO:0000255" key="1">
    <source>
        <dbReference type="HAMAP-Rule" id="MF_00432"/>
    </source>
</evidence>
<gene>
    <name evidence="1" type="primary">petG</name>
    <name type="ordered locus">MAE_46340</name>
</gene>
<accession>B0JUK8</accession>
<dbReference type="EMBL" id="AP009552">
    <property type="protein sequence ID" value="BAG04456.1"/>
    <property type="molecule type" value="Genomic_DNA"/>
</dbReference>
<dbReference type="RefSeq" id="WP_002738052.1">
    <property type="nucleotide sequence ID" value="NC_010296.1"/>
</dbReference>
<dbReference type="SMR" id="B0JUK8"/>
<dbReference type="STRING" id="449447.MAE_46340"/>
<dbReference type="PaxDb" id="449447-MAE_46340"/>
<dbReference type="EnsemblBacteria" id="BAG04456">
    <property type="protein sequence ID" value="BAG04456"/>
    <property type="gene ID" value="MAE_46340"/>
</dbReference>
<dbReference type="KEGG" id="mar:MAE_46340"/>
<dbReference type="eggNOG" id="ENOG5033BE9">
    <property type="taxonomic scope" value="Bacteria"/>
</dbReference>
<dbReference type="HOGENOM" id="CLU_216962_0_0_3"/>
<dbReference type="BioCyc" id="MAER449447:MAE_RS20105-MONOMER"/>
<dbReference type="Proteomes" id="UP000001510">
    <property type="component" value="Chromosome"/>
</dbReference>
<dbReference type="GO" id="GO:0009512">
    <property type="term" value="C:cytochrome b6f complex"/>
    <property type="evidence" value="ECO:0007669"/>
    <property type="project" value="InterPro"/>
</dbReference>
<dbReference type="GO" id="GO:0031676">
    <property type="term" value="C:plasma membrane-derived thylakoid membrane"/>
    <property type="evidence" value="ECO:0007669"/>
    <property type="project" value="UniProtKB-SubCell"/>
</dbReference>
<dbReference type="GO" id="GO:0045158">
    <property type="term" value="F:electron transporter, transferring electrons within cytochrome b6/f complex of photosystem II activity"/>
    <property type="evidence" value="ECO:0007669"/>
    <property type="project" value="UniProtKB-UniRule"/>
</dbReference>
<dbReference type="GO" id="GO:0017004">
    <property type="term" value="P:cytochrome complex assembly"/>
    <property type="evidence" value="ECO:0007669"/>
    <property type="project" value="UniProtKB-UniRule"/>
</dbReference>
<dbReference type="GO" id="GO:0015979">
    <property type="term" value="P:photosynthesis"/>
    <property type="evidence" value="ECO:0007669"/>
    <property type="project" value="UniProtKB-KW"/>
</dbReference>
<dbReference type="HAMAP" id="MF_00432">
    <property type="entry name" value="Cytb6_f_PetG"/>
    <property type="match status" value="1"/>
</dbReference>
<dbReference type="InterPro" id="IPR003683">
    <property type="entry name" value="Cyt_6/f_cplx_su5"/>
</dbReference>
<dbReference type="InterPro" id="IPR036099">
    <property type="entry name" value="Cyt_6/f_cplx_su5_sf"/>
</dbReference>
<dbReference type="NCBIfam" id="NF001907">
    <property type="entry name" value="PRK00665.1"/>
    <property type="match status" value="1"/>
</dbReference>
<dbReference type="Pfam" id="PF02529">
    <property type="entry name" value="PetG"/>
    <property type="match status" value="1"/>
</dbReference>
<dbReference type="PIRSF" id="PIRSF000034">
    <property type="entry name" value="Cyt_b6-f_V"/>
    <property type="match status" value="1"/>
</dbReference>
<dbReference type="SUPFAM" id="SSF103446">
    <property type="entry name" value="PetG subunit of the cytochrome b6f complex"/>
    <property type="match status" value="1"/>
</dbReference>
<sequence length="38" mass="4118">MIEPLVLGIVLGLIPITLAGLFVAAYLQYKRGNQFGLD</sequence>
<name>PETG_MICAN</name>
<proteinExistence type="inferred from homology"/>